<gene>
    <name evidence="1" type="primary">rpsT</name>
    <name type="ordered locus">Dtur_1106</name>
</gene>
<name>RS20_DICTD</name>
<keyword id="KW-1185">Reference proteome</keyword>
<keyword id="KW-0687">Ribonucleoprotein</keyword>
<keyword id="KW-0689">Ribosomal protein</keyword>
<keyword id="KW-0694">RNA-binding</keyword>
<keyword id="KW-0699">rRNA-binding</keyword>
<feature type="chain" id="PRO_1000126437" description="Small ribosomal subunit protein bS20">
    <location>
        <begin position="1"/>
        <end position="93"/>
    </location>
</feature>
<sequence>MANTKSAIKRIKISERNRIRNRVRLGKIKFYTKQFLKFLNENNIEEAKKILPEVISAIDKAAQKGTLHKNTAARKKSKLMKLLNQKLSANLSS</sequence>
<dbReference type="EMBL" id="CP001251">
    <property type="protein sequence ID" value="ACK42385.1"/>
    <property type="molecule type" value="Genomic_DNA"/>
</dbReference>
<dbReference type="RefSeq" id="WP_012583468.1">
    <property type="nucleotide sequence ID" value="NC_011661.1"/>
</dbReference>
<dbReference type="RefSeq" id="YP_002352999.1">
    <property type="nucleotide sequence ID" value="NC_011661.1"/>
</dbReference>
<dbReference type="SMR" id="B8E2A8"/>
<dbReference type="FunCoup" id="B8E2A8">
    <property type="interactions" value="320"/>
</dbReference>
<dbReference type="STRING" id="515635.Dtur_1106"/>
<dbReference type="EnsemblBacteria" id="ACK42385">
    <property type="protein sequence ID" value="ACK42385"/>
    <property type="gene ID" value="Dtur_1106"/>
</dbReference>
<dbReference type="KEGG" id="dtu:Dtur_1106"/>
<dbReference type="PATRIC" id="fig|515635.4.peg.1142"/>
<dbReference type="eggNOG" id="COG0268">
    <property type="taxonomic scope" value="Bacteria"/>
</dbReference>
<dbReference type="HOGENOM" id="CLU_160655_5_0_0"/>
<dbReference type="InParanoid" id="B8E2A8"/>
<dbReference type="OrthoDB" id="9808392at2"/>
<dbReference type="Proteomes" id="UP000007719">
    <property type="component" value="Chromosome"/>
</dbReference>
<dbReference type="GO" id="GO:0005829">
    <property type="term" value="C:cytosol"/>
    <property type="evidence" value="ECO:0000318"/>
    <property type="project" value="GO_Central"/>
</dbReference>
<dbReference type="GO" id="GO:0015935">
    <property type="term" value="C:small ribosomal subunit"/>
    <property type="evidence" value="ECO:0000318"/>
    <property type="project" value="GO_Central"/>
</dbReference>
<dbReference type="GO" id="GO:0070181">
    <property type="term" value="F:small ribosomal subunit rRNA binding"/>
    <property type="evidence" value="ECO:0000318"/>
    <property type="project" value="GO_Central"/>
</dbReference>
<dbReference type="GO" id="GO:0003735">
    <property type="term" value="F:structural constituent of ribosome"/>
    <property type="evidence" value="ECO:0007669"/>
    <property type="project" value="InterPro"/>
</dbReference>
<dbReference type="GO" id="GO:0006412">
    <property type="term" value="P:translation"/>
    <property type="evidence" value="ECO:0007669"/>
    <property type="project" value="UniProtKB-UniRule"/>
</dbReference>
<dbReference type="FunFam" id="1.20.58.110:FF:000001">
    <property type="entry name" value="30S ribosomal protein S20"/>
    <property type="match status" value="1"/>
</dbReference>
<dbReference type="Gene3D" id="1.20.58.110">
    <property type="entry name" value="Ribosomal protein S20"/>
    <property type="match status" value="1"/>
</dbReference>
<dbReference type="HAMAP" id="MF_00500">
    <property type="entry name" value="Ribosomal_bS20"/>
    <property type="match status" value="1"/>
</dbReference>
<dbReference type="InterPro" id="IPR002583">
    <property type="entry name" value="Ribosomal_bS20"/>
</dbReference>
<dbReference type="InterPro" id="IPR036510">
    <property type="entry name" value="Ribosomal_bS20_sf"/>
</dbReference>
<dbReference type="NCBIfam" id="TIGR00029">
    <property type="entry name" value="S20"/>
    <property type="match status" value="1"/>
</dbReference>
<dbReference type="PANTHER" id="PTHR33398">
    <property type="entry name" value="30S RIBOSOMAL PROTEIN S20"/>
    <property type="match status" value="1"/>
</dbReference>
<dbReference type="PANTHER" id="PTHR33398:SF1">
    <property type="entry name" value="SMALL RIBOSOMAL SUBUNIT PROTEIN BS20C"/>
    <property type="match status" value="1"/>
</dbReference>
<dbReference type="Pfam" id="PF01649">
    <property type="entry name" value="Ribosomal_S20p"/>
    <property type="match status" value="1"/>
</dbReference>
<dbReference type="SUPFAM" id="SSF46992">
    <property type="entry name" value="Ribosomal protein S20"/>
    <property type="match status" value="1"/>
</dbReference>
<comment type="function">
    <text evidence="1">Binds directly to 16S ribosomal RNA.</text>
</comment>
<comment type="similarity">
    <text evidence="1">Belongs to the bacterial ribosomal protein bS20 family.</text>
</comment>
<protein>
    <recommendedName>
        <fullName evidence="1">Small ribosomal subunit protein bS20</fullName>
    </recommendedName>
    <alternativeName>
        <fullName evidence="2">30S ribosomal protein S20</fullName>
    </alternativeName>
</protein>
<proteinExistence type="inferred from homology"/>
<evidence type="ECO:0000255" key="1">
    <source>
        <dbReference type="HAMAP-Rule" id="MF_00500"/>
    </source>
</evidence>
<evidence type="ECO:0000305" key="2"/>
<accession>B8E2A8</accession>
<organism>
    <name type="scientific">Dictyoglomus turgidum (strain DSM 6724 / Z-1310)</name>
    <dbReference type="NCBI Taxonomy" id="515635"/>
    <lineage>
        <taxon>Bacteria</taxon>
        <taxon>Pseudomonadati</taxon>
        <taxon>Dictyoglomota</taxon>
        <taxon>Dictyoglomia</taxon>
        <taxon>Dictyoglomales</taxon>
        <taxon>Dictyoglomaceae</taxon>
        <taxon>Dictyoglomus</taxon>
    </lineage>
</organism>
<reference key="1">
    <citation type="journal article" date="2016" name="Front. Microbiol.">
        <title>The complete genome sequence of hyperthermophile Dictyoglomus turgidum DSM 6724 reveals a specialized carbohydrate fermentor.</title>
        <authorList>
            <person name="Brumm P.J."/>
            <person name="Gowda K."/>
            <person name="Robb F.T."/>
            <person name="Mead D.A."/>
        </authorList>
    </citation>
    <scope>NUCLEOTIDE SEQUENCE [LARGE SCALE GENOMIC DNA]</scope>
    <source>
        <strain>DSM 6724 / Z-1310</strain>
    </source>
</reference>